<keyword id="KW-0031">Aminopeptidase</keyword>
<keyword id="KW-0963">Cytoplasm</keyword>
<keyword id="KW-0378">Hydrolase</keyword>
<keyword id="KW-0464">Manganese</keyword>
<keyword id="KW-0479">Metal-binding</keyword>
<keyword id="KW-0645">Protease</keyword>
<accession>A6V0T2</accession>
<reference key="1">
    <citation type="submission" date="2007-06" db="EMBL/GenBank/DDBJ databases">
        <authorList>
            <person name="Dodson R.J."/>
            <person name="Harkins D."/>
            <person name="Paulsen I.T."/>
        </authorList>
    </citation>
    <scope>NUCLEOTIDE SEQUENCE [LARGE SCALE GENOMIC DNA]</scope>
    <source>
        <strain>DSM 24068 / PA7</strain>
    </source>
</reference>
<name>AMPA_PSEP7</name>
<dbReference type="EC" id="3.4.11.1" evidence="1"/>
<dbReference type="EC" id="3.4.11.10" evidence="1"/>
<dbReference type="EMBL" id="CP000744">
    <property type="protein sequence ID" value="ABR85366.1"/>
    <property type="molecule type" value="Genomic_DNA"/>
</dbReference>
<dbReference type="RefSeq" id="WP_012074546.1">
    <property type="nucleotide sequence ID" value="NC_009656.1"/>
</dbReference>
<dbReference type="SMR" id="A6V0T2"/>
<dbReference type="MEROPS" id="M17.003"/>
<dbReference type="KEGG" id="pap:PSPA7_1282"/>
<dbReference type="HOGENOM" id="CLU_013734_0_1_6"/>
<dbReference type="Proteomes" id="UP000001582">
    <property type="component" value="Chromosome"/>
</dbReference>
<dbReference type="GO" id="GO:0005737">
    <property type="term" value="C:cytoplasm"/>
    <property type="evidence" value="ECO:0007669"/>
    <property type="project" value="UniProtKB-SubCell"/>
</dbReference>
<dbReference type="GO" id="GO:0030145">
    <property type="term" value="F:manganese ion binding"/>
    <property type="evidence" value="ECO:0007669"/>
    <property type="project" value="UniProtKB-UniRule"/>
</dbReference>
<dbReference type="GO" id="GO:0070006">
    <property type="term" value="F:metalloaminopeptidase activity"/>
    <property type="evidence" value="ECO:0007669"/>
    <property type="project" value="InterPro"/>
</dbReference>
<dbReference type="GO" id="GO:0006508">
    <property type="term" value="P:proteolysis"/>
    <property type="evidence" value="ECO:0007669"/>
    <property type="project" value="UniProtKB-KW"/>
</dbReference>
<dbReference type="CDD" id="cd00433">
    <property type="entry name" value="Peptidase_M17"/>
    <property type="match status" value="1"/>
</dbReference>
<dbReference type="FunFam" id="3.40.630.10:FF:000004">
    <property type="entry name" value="Probable cytosol aminopeptidase"/>
    <property type="match status" value="1"/>
</dbReference>
<dbReference type="Gene3D" id="3.40.220.10">
    <property type="entry name" value="Leucine Aminopeptidase, subunit E, domain 1"/>
    <property type="match status" value="1"/>
</dbReference>
<dbReference type="Gene3D" id="3.40.630.10">
    <property type="entry name" value="Zn peptidases"/>
    <property type="match status" value="1"/>
</dbReference>
<dbReference type="HAMAP" id="MF_00181">
    <property type="entry name" value="Cytosol_peptidase_M17"/>
    <property type="match status" value="1"/>
</dbReference>
<dbReference type="InterPro" id="IPR011356">
    <property type="entry name" value="Leucine_aapep/pepB"/>
</dbReference>
<dbReference type="InterPro" id="IPR043472">
    <property type="entry name" value="Macro_dom-like"/>
</dbReference>
<dbReference type="InterPro" id="IPR000819">
    <property type="entry name" value="Peptidase_M17_C"/>
</dbReference>
<dbReference type="InterPro" id="IPR023042">
    <property type="entry name" value="Peptidase_M17_leu_NH2_pept"/>
</dbReference>
<dbReference type="InterPro" id="IPR008283">
    <property type="entry name" value="Peptidase_M17_N"/>
</dbReference>
<dbReference type="NCBIfam" id="NF002073">
    <property type="entry name" value="PRK00913.1-2"/>
    <property type="match status" value="1"/>
</dbReference>
<dbReference type="NCBIfam" id="NF002074">
    <property type="entry name" value="PRK00913.1-4"/>
    <property type="match status" value="1"/>
</dbReference>
<dbReference type="NCBIfam" id="NF002077">
    <property type="entry name" value="PRK00913.2-4"/>
    <property type="match status" value="1"/>
</dbReference>
<dbReference type="PANTHER" id="PTHR11963:SF23">
    <property type="entry name" value="CYTOSOL AMINOPEPTIDASE"/>
    <property type="match status" value="1"/>
</dbReference>
<dbReference type="PANTHER" id="PTHR11963">
    <property type="entry name" value="LEUCINE AMINOPEPTIDASE-RELATED"/>
    <property type="match status" value="1"/>
</dbReference>
<dbReference type="Pfam" id="PF00883">
    <property type="entry name" value="Peptidase_M17"/>
    <property type="match status" value="1"/>
</dbReference>
<dbReference type="Pfam" id="PF02789">
    <property type="entry name" value="Peptidase_M17_N"/>
    <property type="match status" value="1"/>
</dbReference>
<dbReference type="PRINTS" id="PR00481">
    <property type="entry name" value="LAMNOPPTDASE"/>
</dbReference>
<dbReference type="SUPFAM" id="SSF52949">
    <property type="entry name" value="Macro domain-like"/>
    <property type="match status" value="1"/>
</dbReference>
<dbReference type="SUPFAM" id="SSF53187">
    <property type="entry name" value="Zn-dependent exopeptidases"/>
    <property type="match status" value="1"/>
</dbReference>
<dbReference type="PROSITE" id="PS00631">
    <property type="entry name" value="CYTOSOL_AP"/>
    <property type="match status" value="1"/>
</dbReference>
<protein>
    <recommendedName>
        <fullName evidence="1">Probable cytosol aminopeptidase</fullName>
        <ecNumber evidence="1">3.4.11.1</ecNumber>
    </recommendedName>
    <alternativeName>
        <fullName evidence="1">Leucine aminopeptidase</fullName>
        <shortName evidence="1">LAP</shortName>
        <ecNumber evidence="1">3.4.11.10</ecNumber>
    </alternativeName>
    <alternativeName>
        <fullName evidence="1">Leucyl aminopeptidase</fullName>
    </alternativeName>
</protein>
<gene>
    <name evidence="1" type="primary">pepA</name>
    <name type="ordered locus">PSPA7_1282</name>
</gene>
<proteinExistence type="inferred from homology"/>
<sequence>MEFLVKSVRPETLKTATLVLAVGEGRKLGASAKAVDDATGGAIGAVLKRGDLAGKVGQTLLLQNLPNLKAERVLLVGAGKERELGDRQYRKLASAVLSTLKGLAGADAVLALGDLAVKGRDAHAKARLLVETLADGLYVFDRYKSQKAEPLKLKKLTLLADKADSAAVEQGSKEAQAIANGMALTRDLGNLPPNVCHPTFLGEQAKALAKEFKGLKVEVHDEQKLRELGMGSFLAVAQGSEQPPRLIVLQYNGAKKDQAPHVLVGKGITFDTGGISLKPGLGMDEMKFDMCGAASVFGTFRAVLELQLPINLVGLLACAENMPSGGATRPGDIVTTMSGQTVEILNTDAEGRLVLCDALTYAERFKPQSVVDIATLTGACIVALGSNTSGLMGNNEALVRQLLKAGEFADDRAWQLPLFDEYQEQLDSPFADIANIGGPKAGTITAGCFLSRFAKKYHWAHLDIAGTAWISGGKDKGATGRPVPLLTQYLLERAK</sequence>
<organism>
    <name type="scientific">Pseudomonas paraeruginosa (strain DSM 24068 / PA7)</name>
    <name type="common">Pseudomonas aeruginosa (strain PA7)</name>
    <dbReference type="NCBI Taxonomy" id="381754"/>
    <lineage>
        <taxon>Bacteria</taxon>
        <taxon>Pseudomonadati</taxon>
        <taxon>Pseudomonadota</taxon>
        <taxon>Gammaproteobacteria</taxon>
        <taxon>Pseudomonadales</taxon>
        <taxon>Pseudomonadaceae</taxon>
        <taxon>Pseudomonas</taxon>
        <taxon>Pseudomonas paraeruginosa</taxon>
    </lineage>
</organism>
<comment type="function">
    <text evidence="1">Presumably involved in the processing and regular turnover of intracellular proteins. Catalyzes the removal of unsubstituted N-terminal amino acids from various peptides.</text>
</comment>
<comment type="catalytic activity">
    <reaction evidence="1">
        <text>Release of an N-terminal amino acid, Xaa-|-Yaa-, in which Xaa is preferably Leu, but may be other amino acids including Pro although not Arg or Lys, and Yaa may be Pro. Amino acid amides and methyl esters are also readily hydrolyzed, but rates on arylamides are exceedingly low.</text>
        <dbReference type="EC" id="3.4.11.1"/>
    </reaction>
</comment>
<comment type="catalytic activity">
    <reaction evidence="1">
        <text>Release of an N-terminal amino acid, preferentially leucine, but not glutamic or aspartic acids.</text>
        <dbReference type="EC" id="3.4.11.10"/>
    </reaction>
</comment>
<comment type="cofactor">
    <cofactor evidence="1">
        <name>Mn(2+)</name>
        <dbReference type="ChEBI" id="CHEBI:29035"/>
    </cofactor>
    <text evidence="1">Binds 2 manganese ions per subunit.</text>
</comment>
<comment type="subcellular location">
    <subcellularLocation>
        <location evidence="1">Cytoplasm</location>
    </subcellularLocation>
</comment>
<comment type="similarity">
    <text evidence="1">Belongs to the peptidase M17 family.</text>
</comment>
<evidence type="ECO:0000255" key="1">
    <source>
        <dbReference type="HAMAP-Rule" id="MF_00181"/>
    </source>
</evidence>
<feature type="chain" id="PRO_1000019954" description="Probable cytosol aminopeptidase">
    <location>
        <begin position="1"/>
        <end position="495"/>
    </location>
</feature>
<feature type="active site" evidence="1">
    <location>
        <position position="278"/>
    </location>
</feature>
<feature type="active site" evidence="1">
    <location>
        <position position="352"/>
    </location>
</feature>
<feature type="binding site" evidence="1">
    <location>
        <position position="266"/>
    </location>
    <ligand>
        <name>Mn(2+)</name>
        <dbReference type="ChEBI" id="CHEBI:29035"/>
        <label>2</label>
    </ligand>
</feature>
<feature type="binding site" evidence="1">
    <location>
        <position position="271"/>
    </location>
    <ligand>
        <name>Mn(2+)</name>
        <dbReference type="ChEBI" id="CHEBI:29035"/>
        <label>1</label>
    </ligand>
</feature>
<feature type="binding site" evidence="1">
    <location>
        <position position="271"/>
    </location>
    <ligand>
        <name>Mn(2+)</name>
        <dbReference type="ChEBI" id="CHEBI:29035"/>
        <label>2</label>
    </ligand>
</feature>
<feature type="binding site" evidence="1">
    <location>
        <position position="289"/>
    </location>
    <ligand>
        <name>Mn(2+)</name>
        <dbReference type="ChEBI" id="CHEBI:29035"/>
        <label>2</label>
    </ligand>
</feature>
<feature type="binding site" evidence="1">
    <location>
        <position position="348"/>
    </location>
    <ligand>
        <name>Mn(2+)</name>
        <dbReference type="ChEBI" id="CHEBI:29035"/>
        <label>1</label>
    </ligand>
</feature>
<feature type="binding site" evidence="1">
    <location>
        <position position="350"/>
    </location>
    <ligand>
        <name>Mn(2+)</name>
        <dbReference type="ChEBI" id="CHEBI:29035"/>
        <label>1</label>
    </ligand>
</feature>
<feature type="binding site" evidence="1">
    <location>
        <position position="350"/>
    </location>
    <ligand>
        <name>Mn(2+)</name>
        <dbReference type="ChEBI" id="CHEBI:29035"/>
        <label>2</label>
    </ligand>
</feature>